<name>PSAA_EUCGG</name>
<feature type="chain" id="PRO_0000275943" description="Photosystem I P700 chlorophyll a apoprotein A1">
    <location>
        <begin position="1"/>
        <end position="750"/>
    </location>
</feature>
<feature type="transmembrane region" description="Helical; Name=I" evidence="1">
    <location>
        <begin position="70"/>
        <end position="93"/>
    </location>
</feature>
<feature type="transmembrane region" description="Helical; Name=II" evidence="1">
    <location>
        <begin position="156"/>
        <end position="179"/>
    </location>
</feature>
<feature type="transmembrane region" description="Helical; Name=III" evidence="1">
    <location>
        <begin position="195"/>
        <end position="219"/>
    </location>
</feature>
<feature type="transmembrane region" description="Helical; Name=IV" evidence="1">
    <location>
        <begin position="291"/>
        <end position="309"/>
    </location>
</feature>
<feature type="transmembrane region" description="Helical; Name=V" evidence="1">
    <location>
        <begin position="346"/>
        <end position="369"/>
    </location>
</feature>
<feature type="transmembrane region" description="Helical; Name=VI" evidence="1">
    <location>
        <begin position="385"/>
        <end position="411"/>
    </location>
</feature>
<feature type="transmembrane region" description="Helical; Name=VII" evidence="1">
    <location>
        <begin position="433"/>
        <end position="455"/>
    </location>
</feature>
<feature type="transmembrane region" description="Helical; Name=VIII" evidence="1">
    <location>
        <begin position="531"/>
        <end position="549"/>
    </location>
</feature>
<feature type="transmembrane region" description="Helical; Name=IX" evidence="1">
    <location>
        <begin position="589"/>
        <end position="610"/>
    </location>
</feature>
<feature type="transmembrane region" description="Helical; Name=X" evidence="1">
    <location>
        <begin position="664"/>
        <end position="686"/>
    </location>
</feature>
<feature type="transmembrane region" description="Helical; Name=XI" evidence="1">
    <location>
        <begin position="724"/>
        <end position="744"/>
    </location>
</feature>
<feature type="binding site" evidence="1">
    <location>
        <position position="573"/>
    </location>
    <ligand>
        <name>[4Fe-4S] cluster</name>
        <dbReference type="ChEBI" id="CHEBI:49883"/>
        <note>ligand shared between dimeric partners</note>
    </ligand>
</feature>
<feature type="binding site" evidence="1">
    <location>
        <position position="582"/>
    </location>
    <ligand>
        <name>[4Fe-4S] cluster</name>
        <dbReference type="ChEBI" id="CHEBI:49883"/>
        <note>ligand shared between dimeric partners</note>
    </ligand>
</feature>
<feature type="binding site" description="axial binding residue" evidence="1">
    <location>
        <position position="675"/>
    </location>
    <ligand>
        <name>chlorophyll a'</name>
        <dbReference type="ChEBI" id="CHEBI:189419"/>
        <label>A1</label>
    </ligand>
    <ligandPart>
        <name>Mg</name>
        <dbReference type="ChEBI" id="CHEBI:25107"/>
    </ligandPart>
</feature>
<feature type="binding site" description="axial binding residue" evidence="1">
    <location>
        <position position="683"/>
    </location>
    <ligand>
        <name>chlorophyll a</name>
        <dbReference type="ChEBI" id="CHEBI:58416"/>
        <label>A3</label>
    </ligand>
    <ligandPart>
        <name>Mg</name>
        <dbReference type="ChEBI" id="CHEBI:25107"/>
    </ligandPart>
</feature>
<feature type="binding site" evidence="1">
    <location>
        <position position="691"/>
    </location>
    <ligand>
        <name>chlorophyll a</name>
        <dbReference type="ChEBI" id="CHEBI:58416"/>
        <label>A3</label>
    </ligand>
</feature>
<feature type="binding site" evidence="1">
    <location>
        <position position="692"/>
    </location>
    <ligand>
        <name>phylloquinone</name>
        <dbReference type="ChEBI" id="CHEBI:18067"/>
        <label>A</label>
    </ligand>
</feature>
<evidence type="ECO:0000255" key="1">
    <source>
        <dbReference type="HAMAP-Rule" id="MF_00458"/>
    </source>
</evidence>
<gene>
    <name evidence="1" type="primary">psaA</name>
</gene>
<sequence length="750" mass="83101">MIIRSPEPEVKILVDRDPIKTSFEEWAKPGHFSRTIAKGPDTTTWIWNLHADAHDFDSHTNDLEEISRKVFSAHFGQLSIIFLWLSGMYFHGARFSNYEAWLSDPTHIGPSAQVVWPIVGQEILNGDVGGGFRGIQITSGFFQIWRASGITSELQLYCTAIGALVFAALMLFAGWFHYHKAAPKLAWFQDVESMLNHHLAGLLGLGSLSWAGHQVHVSLPINQFLNAGVDPKEIPLPHEFILNRDLLAQLYPSFAEGATPFFTLNWSKYAEFLTFRGGLDPVTGGLWLTDIAHHHLAIAILFLIAGHMYRTNWGIGHGIKDILEAHKGPFTGQGHKGLYEILTTSWHAQLSLNLAMLGSLTIVVAHHMYSMPPYPYLATDYGTQLSLFTHHMWIGGFLIVGAAAHAAIFMVRDYDPTTRYNDLLDRVLRHRDAIISHLNWVCIFLGFHSFGLYIHNDTMSALGRPQDMFSDTAIQLQPVFAQWIQNTHALAPAATAPGATASTSLTWGGGDLVAVGGKVALLPIPLGTADFLVHHIHAFTIHVTVLILLKGVLFARSSRLIPDKANLGFRFPCDGPGRGGTCQVSAWDHVFLGLFWMYNAISVVIFHFSWKMQSDVWGSISDQGVVTHITGGNFAQSSITINGWLRDFLWAQASQVIQSYGSSLSAYGLFFLGAHFVWAFSLMFLFSGRGYWQELIESIVWAHNKLKVAPATQPRALSIVQGRAVGVTHYLLGGIATTWAFFLARIIAVG</sequence>
<geneLocation type="chloroplast"/>
<organism>
    <name type="scientific">Eucalyptus globulus subsp. globulus</name>
    <name type="common">Tasmanian blue gum</name>
    <dbReference type="NCBI Taxonomy" id="71271"/>
    <lineage>
        <taxon>Eukaryota</taxon>
        <taxon>Viridiplantae</taxon>
        <taxon>Streptophyta</taxon>
        <taxon>Embryophyta</taxon>
        <taxon>Tracheophyta</taxon>
        <taxon>Spermatophyta</taxon>
        <taxon>Magnoliopsida</taxon>
        <taxon>eudicotyledons</taxon>
        <taxon>Gunneridae</taxon>
        <taxon>Pentapetalae</taxon>
        <taxon>rosids</taxon>
        <taxon>malvids</taxon>
        <taxon>Myrtales</taxon>
        <taxon>Myrtaceae</taxon>
        <taxon>Myrtoideae</taxon>
        <taxon>Eucalypteae</taxon>
        <taxon>Eucalyptus</taxon>
    </lineage>
</organism>
<comment type="function">
    <text>PsaA and PsaB bind P700, the primary electron donor of photosystem I (PSI), as well as the electron acceptors A0, A1 and FX. PSI is a plastocyanin-ferredoxin oxidoreductase, converting photonic excitation into a charge separation, which transfers an electron from the donor P700 chlorophyll pair to the spectroscopically characterized acceptors A0, A1, FX, FA and FB in turn. Oxidized P700 is reduced on the lumenal side of the thylakoid membrane by plastocyanin.</text>
</comment>
<comment type="catalytic activity">
    <reaction evidence="1">
        <text>reduced [plastocyanin] + hnu + oxidized [2Fe-2S]-[ferredoxin] = oxidized [plastocyanin] + reduced [2Fe-2S]-[ferredoxin]</text>
        <dbReference type="Rhea" id="RHEA:30407"/>
        <dbReference type="Rhea" id="RHEA-COMP:10000"/>
        <dbReference type="Rhea" id="RHEA-COMP:10001"/>
        <dbReference type="Rhea" id="RHEA-COMP:10039"/>
        <dbReference type="Rhea" id="RHEA-COMP:10040"/>
        <dbReference type="ChEBI" id="CHEBI:29036"/>
        <dbReference type="ChEBI" id="CHEBI:30212"/>
        <dbReference type="ChEBI" id="CHEBI:33737"/>
        <dbReference type="ChEBI" id="CHEBI:33738"/>
        <dbReference type="ChEBI" id="CHEBI:49552"/>
        <dbReference type="EC" id="1.97.1.12"/>
    </reaction>
</comment>
<comment type="cofactor">
    <text evidence="1">P700 is a chlorophyll a/chlorophyll a' dimer, A0 is one or more chlorophyll a, A1 is one or both phylloquinones and FX is a shared 4Fe-4S iron-sulfur center.</text>
</comment>
<comment type="subunit">
    <text evidence="1">The PsaA/B heterodimer binds the P700 chlorophyll special pair and subsequent electron acceptors. PSI consists of a core antenna complex that captures photons, and an electron transfer chain that converts photonic excitation into a charge separation. The eukaryotic PSI reaction center is composed of at least 11 subunits.</text>
</comment>
<comment type="subcellular location">
    <subcellularLocation>
        <location evidence="1">Plastid</location>
        <location evidence="1">Chloroplast thylakoid membrane</location>
        <topology evidence="1">Multi-pass membrane protein</topology>
    </subcellularLocation>
</comment>
<comment type="similarity">
    <text evidence="1">Belongs to the PsaA/PsaB family.</text>
</comment>
<accession>Q49KZ8</accession>
<keyword id="KW-0004">4Fe-4S</keyword>
<keyword id="KW-0148">Chlorophyll</keyword>
<keyword id="KW-0150">Chloroplast</keyword>
<keyword id="KW-0157">Chromophore</keyword>
<keyword id="KW-0249">Electron transport</keyword>
<keyword id="KW-0408">Iron</keyword>
<keyword id="KW-0411">Iron-sulfur</keyword>
<keyword id="KW-0460">Magnesium</keyword>
<keyword id="KW-0472">Membrane</keyword>
<keyword id="KW-0479">Metal-binding</keyword>
<keyword id="KW-0560">Oxidoreductase</keyword>
<keyword id="KW-0602">Photosynthesis</keyword>
<keyword id="KW-0603">Photosystem I</keyword>
<keyword id="KW-0934">Plastid</keyword>
<keyword id="KW-0793">Thylakoid</keyword>
<keyword id="KW-0812">Transmembrane</keyword>
<keyword id="KW-1133">Transmembrane helix</keyword>
<keyword id="KW-0813">Transport</keyword>
<dbReference type="EC" id="1.97.1.12" evidence="1"/>
<dbReference type="EMBL" id="AY780259">
    <property type="protein sequence ID" value="AAX21029.1"/>
    <property type="molecule type" value="Genomic_DNA"/>
</dbReference>
<dbReference type="RefSeq" id="YP_636299.1">
    <property type="nucleotide sequence ID" value="NC_008115.1"/>
</dbReference>
<dbReference type="SMR" id="Q49KZ8"/>
<dbReference type="GeneID" id="4108388"/>
<dbReference type="GO" id="GO:0009535">
    <property type="term" value="C:chloroplast thylakoid membrane"/>
    <property type="evidence" value="ECO:0007669"/>
    <property type="project" value="UniProtKB-SubCell"/>
</dbReference>
<dbReference type="GO" id="GO:0009522">
    <property type="term" value="C:photosystem I"/>
    <property type="evidence" value="ECO:0007669"/>
    <property type="project" value="UniProtKB-KW"/>
</dbReference>
<dbReference type="GO" id="GO:0051539">
    <property type="term" value="F:4 iron, 4 sulfur cluster binding"/>
    <property type="evidence" value="ECO:0007669"/>
    <property type="project" value="UniProtKB-KW"/>
</dbReference>
<dbReference type="GO" id="GO:0016168">
    <property type="term" value="F:chlorophyll binding"/>
    <property type="evidence" value="ECO:0007669"/>
    <property type="project" value="UniProtKB-KW"/>
</dbReference>
<dbReference type="GO" id="GO:0009055">
    <property type="term" value="F:electron transfer activity"/>
    <property type="evidence" value="ECO:0007669"/>
    <property type="project" value="UniProtKB-UniRule"/>
</dbReference>
<dbReference type="GO" id="GO:0000287">
    <property type="term" value="F:magnesium ion binding"/>
    <property type="evidence" value="ECO:0007669"/>
    <property type="project" value="UniProtKB-UniRule"/>
</dbReference>
<dbReference type="GO" id="GO:0016491">
    <property type="term" value="F:oxidoreductase activity"/>
    <property type="evidence" value="ECO:0007669"/>
    <property type="project" value="UniProtKB-KW"/>
</dbReference>
<dbReference type="GO" id="GO:0015979">
    <property type="term" value="P:photosynthesis"/>
    <property type="evidence" value="ECO:0007669"/>
    <property type="project" value="UniProtKB-UniRule"/>
</dbReference>
<dbReference type="FunFam" id="1.20.1130.10:FF:000001">
    <property type="entry name" value="Photosystem I P700 chlorophyll a apoprotein A2"/>
    <property type="match status" value="1"/>
</dbReference>
<dbReference type="Gene3D" id="1.20.1130.10">
    <property type="entry name" value="Photosystem I PsaA/PsaB"/>
    <property type="match status" value="1"/>
</dbReference>
<dbReference type="HAMAP" id="MF_00458">
    <property type="entry name" value="PSI_PsaA"/>
    <property type="match status" value="1"/>
</dbReference>
<dbReference type="InterPro" id="IPR006243">
    <property type="entry name" value="PSI_PsaA"/>
</dbReference>
<dbReference type="InterPro" id="IPR001280">
    <property type="entry name" value="PSI_PsaA/B"/>
</dbReference>
<dbReference type="InterPro" id="IPR020586">
    <property type="entry name" value="PSI_PsaA/B_CS"/>
</dbReference>
<dbReference type="InterPro" id="IPR036408">
    <property type="entry name" value="PSI_PsaA/B_sf"/>
</dbReference>
<dbReference type="NCBIfam" id="TIGR01335">
    <property type="entry name" value="psaA"/>
    <property type="match status" value="1"/>
</dbReference>
<dbReference type="PANTHER" id="PTHR30128">
    <property type="entry name" value="OUTER MEMBRANE PROTEIN, OMPA-RELATED"/>
    <property type="match status" value="1"/>
</dbReference>
<dbReference type="PANTHER" id="PTHR30128:SF19">
    <property type="entry name" value="PHOTOSYSTEM I P700 CHLOROPHYLL A APOPROTEIN A1-RELATED"/>
    <property type="match status" value="1"/>
</dbReference>
<dbReference type="Pfam" id="PF00223">
    <property type="entry name" value="PsaA_PsaB"/>
    <property type="match status" value="1"/>
</dbReference>
<dbReference type="PIRSF" id="PIRSF002905">
    <property type="entry name" value="PSI_A"/>
    <property type="match status" value="1"/>
</dbReference>
<dbReference type="PRINTS" id="PR00257">
    <property type="entry name" value="PHOTSYSPSAAB"/>
</dbReference>
<dbReference type="SUPFAM" id="SSF81558">
    <property type="entry name" value="Photosystem I subunits PsaA/PsaB"/>
    <property type="match status" value="1"/>
</dbReference>
<dbReference type="PROSITE" id="PS00419">
    <property type="entry name" value="PHOTOSYSTEM_I_PSAAB"/>
    <property type="match status" value="1"/>
</dbReference>
<protein>
    <recommendedName>
        <fullName evidence="1">Photosystem I P700 chlorophyll a apoprotein A1</fullName>
        <ecNumber evidence="1">1.97.1.12</ecNumber>
    </recommendedName>
    <alternativeName>
        <fullName evidence="1">PSI-A</fullName>
    </alternativeName>
    <alternativeName>
        <fullName evidence="1">PsaA</fullName>
    </alternativeName>
</protein>
<proteinExistence type="inferred from homology"/>
<reference key="1">
    <citation type="journal article" date="2005" name="DNA Res.">
        <title>Complete nucleotide sequence of the chloroplast genome from the Tasmanian blue gum, Eucalyptus globulus (Myrtaceae).</title>
        <authorList>
            <person name="Steane D.A."/>
        </authorList>
    </citation>
    <scope>NUCLEOTIDE SEQUENCE [LARGE SCALE GENOMIC DNA]</scope>
</reference>